<comment type="function">
    <text evidence="1">Component of the proteasome core, a large protease complex with broad specificity involved in protein degradation.</text>
</comment>
<comment type="catalytic activity">
    <reaction evidence="1">
        <text>Cleavage of peptide bonds with very broad specificity.</text>
        <dbReference type="EC" id="3.4.25.1"/>
    </reaction>
</comment>
<comment type="activity regulation">
    <text evidence="1">The formation of the proteasomal ATPase PAN-20S proteasome complex, via the docking of the C-termini of PAN into the intersubunit pockets in the alpha-rings, triggers opening of the gate for substrate entry. Interconversion between the open-gate and close-gate conformations leads to a dynamic regulation of the 20S proteasome proteolysis activity.</text>
</comment>
<comment type="subunit">
    <text evidence="1">The 20S proteasome core is composed of 14 alpha and 14 beta subunits that assemble into four stacked heptameric rings, resulting in a barrel-shaped structure. The two inner rings, each composed of seven catalytic beta subunits, are sandwiched by two outer rings, each composed of seven alpha subunits. The catalytic chamber with the active sites is on the inside of the barrel. Has a gated structure, the ends of the cylinder being occluded by the N-termini of the alpha-subunits. Is capped at one or both ends by the proteasome regulatory ATPase, PAN.</text>
</comment>
<comment type="subcellular location">
    <subcellularLocation>
        <location evidence="1">Cytoplasm</location>
    </subcellularLocation>
</comment>
<comment type="similarity">
    <text evidence="1">Belongs to the peptidase T1B family.</text>
</comment>
<dbReference type="EC" id="3.4.25.1" evidence="1"/>
<dbReference type="EMBL" id="CP001932">
    <property type="protein sequence ID" value="ADD06901.1"/>
    <property type="molecule type" value="Genomic_DNA"/>
</dbReference>
<dbReference type="RefSeq" id="WP_004215863.1">
    <property type="nucleotide sequence ID" value="NC_013922.1"/>
</dbReference>
<dbReference type="SMR" id="D3SSQ6"/>
<dbReference type="STRING" id="547559.Nmag_3351"/>
<dbReference type="MEROPS" id="T01.002"/>
<dbReference type="PaxDb" id="547559-Nmag_3351"/>
<dbReference type="GeneID" id="8826217"/>
<dbReference type="KEGG" id="nmg:Nmag_3351"/>
<dbReference type="eggNOG" id="arCOG00970">
    <property type="taxonomic scope" value="Archaea"/>
</dbReference>
<dbReference type="HOGENOM" id="CLU_035750_7_2_2"/>
<dbReference type="OrthoDB" id="6330at2157"/>
<dbReference type="Proteomes" id="UP000001879">
    <property type="component" value="Chromosome"/>
</dbReference>
<dbReference type="GO" id="GO:0005737">
    <property type="term" value="C:cytoplasm"/>
    <property type="evidence" value="ECO:0007669"/>
    <property type="project" value="UniProtKB-SubCell"/>
</dbReference>
<dbReference type="GO" id="GO:0019774">
    <property type="term" value="C:proteasome core complex, beta-subunit complex"/>
    <property type="evidence" value="ECO:0007669"/>
    <property type="project" value="UniProtKB-UniRule"/>
</dbReference>
<dbReference type="GO" id="GO:0004298">
    <property type="term" value="F:threonine-type endopeptidase activity"/>
    <property type="evidence" value="ECO:0007669"/>
    <property type="project" value="UniProtKB-UniRule"/>
</dbReference>
<dbReference type="GO" id="GO:0010498">
    <property type="term" value="P:proteasomal protein catabolic process"/>
    <property type="evidence" value="ECO:0007669"/>
    <property type="project" value="UniProtKB-UniRule"/>
</dbReference>
<dbReference type="Gene3D" id="3.60.20.10">
    <property type="entry name" value="Glutamine Phosphoribosylpyrophosphate, subunit 1, domain 1"/>
    <property type="match status" value="1"/>
</dbReference>
<dbReference type="HAMAP" id="MF_02113_A">
    <property type="entry name" value="Proteasome_B_A"/>
    <property type="match status" value="1"/>
</dbReference>
<dbReference type="InterPro" id="IPR029055">
    <property type="entry name" value="Ntn_hydrolases_N"/>
</dbReference>
<dbReference type="InterPro" id="IPR019983">
    <property type="entry name" value="Pept_T1A_Psome_bsu_arc"/>
</dbReference>
<dbReference type="InterPro" id="IPR000243">
    <property type="entry name" value="Pept_T1A_subB"/>
</dbReference>
<dbReference type="InterPro" id="IPR001353">
    <property type="entry name" value="Proteasome_sua/b"/>
</dbReference>
<dbReference type="InterPro" id="IPR023333">
    <property type="entry name" value="Proteasome_suB-type"/>
</dbReference>
<dbReference type="NCBIfam" id="TIGR03634">
    <property type="entry name" value="arc_protsome_B"/>
    <property type="match status" value="1"/>
</dbReference>
<dbReference type="PANTHER" id="PTHR32194:SF0">
    <property type="entry name" value="ATP-DEPENDENT PROTEASE SUBUNIT HSLV"/>
    <property type="match status" value="1"/>
</dbReference>
<dbReference type="PANTHER" id="PTHR32194">
    <property type="entry name" value="METALLOPROTEASE TLDD"/>
    <property type="match status" value="1"/>
</dbReference>
<dbReference type="Pfam" id="PF00227">
    <property type="entry name" value="Proteasome"/>
    <property type="match status" value="1"/>
</dbReference>
<dbReference type="PRINTS" id="PR00141">
    <property type="entry name" value="PROTEASOME"/>
</dbReference>
<dbReference type="SUPFAM" id="SSF56235">
    <property type="entry name" value="N-terminal nucleophile aminohydrolases (Ntn hydrolases)"/>
    <property type="match status" value="1"/>
</dbReference>
<dbReference type="PROSITE" id="PS51476">
    <property type="entry name" value="PROTEASOME_BETA_2"/>
    <property type="match status" value="1"/>
</dbReference>
<evidence type="ECO:0000255" key="1">
    <source>
        <dbReference type="HAMAP-Rule" id="MF_02113"/>
    </source>
</evidence>
<evidence type="ECO:0000256" key="2">
    <source>
        <dbReference type="SAM" id="MobiDB-lite"/>
    </source>
</evidence>
<organism>
    <name type="scientific">Natrialba magadii (strain ATCC 43099 / DSM 3394 / CCM 3739 / CIP 104546 / IAM 13178 / JCM 8861 / NBRC 102185 / NCIMB 2190 / MS3)</name>
    <name type="common">Natronobacterium magadii</name>
    <dbReference type="NCBI Taxonomy" id="547559"/>
    <lineage>
        <taxon>Archaea</taxon>
        <taxon>Methanobacteriati</taxon>
        <taxon>Methanobacteriota</taxon>
        <taxon>Stenosarchaea group</taxon>
        <taxon>Halobacteria</taxon>
        <taxon>Halobacteriales</taxon>
        <taxon>Natrialbaceae</taxon>
        <taxon>Natrialba</taxon>
    </lineage>
</organism>
<protein>
    <recommendedName>
        <fullName evidence="1">Proteasome subunit beta</fullName>
        <ecNumber evidence="1">3.4.25.1</ecNumber>
    </recommendedName>
    <alternativeName>
        <fullName evidence="1">20S proteasome beta subunit</fullName>
    </alternativeName>
    <alternativeName>
        <fullName evidence="1">Proteasome core protein PsmB</fullName>
    </alternativeName>
</protein>
<name>PSB_NATMM</name>
<feature type="propeptide" id="PRO_0000397382" description="Removed in mature form; by autocatalysis" evidence="1">
    <location>
        <begin position="1"/>
        <end position="48"/>
    </location>
</feature>
<feature type="chain" id="PRO_0000397383" description="Proteasome subunit beta">
    <location>
        <begin position="49"/>
        <end position="243"/>
    </location>
</feature>
<feature type="region of interest" description="Disordered" evidence="2">
    <location>
        <begin position="1"/>
        <end position="29"/>
    </location>
</feature>
<feature type="compositionally biased region" description="Polar residues" evidence="2">
    <location>
        <begin position="1"/>
        <end position="16"/>
    </location>
</feature>
<feature type="active site" description="Nucleophile" evidence="1">
    <location>
        <position position="49"/>
    </location>
</feature>
<proteinExistence type="inferred from homology"/>
<accession>D3SSQ6</accession>
<sequence>MRAPQHNSDFSRTVNQLADDPNPYEPEVGSMPKNEFSRADLDNVNKTGTTTIGITTEDGVVIATDMRASLGGRFVSNKNVQKVEQIHPTGALTMVGSVGGAQSFIGSLRAEVNLYEARRGEPISMDALATLAGNFARGGPFFAIHPILGGVDEEGSHVYSIDPAGGVMEDDYTVTGSGMQLAYGLLEQEFEEDLSNDEATTVAARAIKSAAERDTGSGNGVFLCEITDEGVDIHGHHDFDEVV</sequence>
<gene>
    <name evidence="1" type="primary">psmB</name>
    <name type="ordered locus">Nmag_3351</name>
</gene>
<reference key="1">
    <citation type="journal article" date="2012" name="BMC Genomics">
        <title>A comparative genomics perspective on the genetic content of the alkaliphilic haloarchaeon Natrialba magadii ATCC 43099T.</title>
        <authorList>
            <person name="Siddaramappa S."/>
            <person name="Challacombe J.F."/>
            <person name="Decastro R.E."/>
            <person name="Pfeiffer F."/>
            <person name="Sastre D.E."/>
            <person name="Gimenez M.I."/>
            <person name="Paggi R.A."/>
            <person name="Detter J.C."/>
            <person name="Davenport K.W."/>
            <person name="Goodwin L.A."/>
            <person name="Kyrpides N."/>
            <person name="Tapia R."/>
            <person name="Pitluck S."/>
            <person name="Lucas S."/>
            <person name="Woyke T."/>
            <person name="Maupin-Furlow J.A."/>
        </authorList>
    </citation>
    <scope>NUCLEOTIDE SEQUENCE [LARGE SCALE GENOMIC DNA]</scope>
    <source>
        <strain>ATCC 43099 / DSM 3394 / CCM 3739 / CIP 104546 / IAM 13178 / JCM 8861 / NBRC 102185 / NCIMB 2190 / MS3</strain>
    </source>
</reference>
<keyword id="KW-0068">Autocatalytic cleavage</keyword>
<keyword id="KW-0963">Cytoplasm</keyword>
<keyword id="KW-0378">Hydrolase</keyword>
<keyword id="KW-0645">Protease</keyword>
<keyword id="KW-0647">Proteasome</keyword>
<keyword id="KW-1185">Reference proteome</keyword>
<keyword id="KW-0888">Threonine protease</keyword>
<keyword id="KW-0865">Zymogen</keyword>